<feature type="chain" id="PRO_0000416547" description="Nonribosomal peptide synthetase 6">
    <location>
        <begin position="1"/>
        <end position="1290"/>
    </location>
</feature>
<feature type="domain" description="Carrier" evidence="1">
    <location>
        <begin position="775"/>
        <end position="851"/>
    </location>
</feature>
<feature type="region of interest" description="Disordered" evidence="2">
    <location>
        <begin position="1"/>
        <end position="27"/>
    </location>
</feature>
<feature type="region of interest" description="Adenylation">
    <location>
        <begin position="260"/>
        <end position="657"/>
    </location>
</feature>
<feature type="region of interest" description="Disordered" evidence="2">
    <location>
        <begin position="846"/>
        <end position="870"/>
    </location>
</feature>
<feature type="region of interest" description="Condensation">
    <location>
        <begin position="914"/>
        <end position="1162"/>
    </location>
</feature>
<feature type="compositionally biased region" description="Basic and acidic residues" evidence="2">
    <location>
        <begin position="852"/>
        <end position="870"/>
    </location>
</feature>
<feature type="modified residue" description="O-(pantetheine 4'-phosphoryl)serine" evidence="1">
    <location>
        <position position="812"/>
    </location>
</feature>
<reference key="1">
    <citation type="journal article" date="2005" name="Nature">
        <title>Genomic sequence of the pathogenic and allergenic filamentous fungus Aspergillus fumigatus.</title>
        <authorList>
            <person name="Nierman W.C."/>
            <person name="Pain A."/>
            <person name="Anderson M.J."/>
            <person name="Wortman J.R."/>
            <person name="Kim H.S."/>
            <person name="Arroyo J."/>
            <person name="Berriman M."/>
            <person name="Abe K."/>
            <person name="Archer D.B."/>
            <person name="Bermejo C."/>
            <person name="Bennett J.W."/>
            <person name="Bowyer P."/>
            <person name="Chen D."/>
            <person name="Collins M."/>
            <person name="Coulsen R."/>
            <person name="Davies R."/>
            <person name="Dyer P.S."/>
            <person name="Farman M.L."/>
            <person name="Fedorova N."/>
            <person name="Fedorova N.D."/>
            <person name="Feldblyum T.V."/>
            <person name="Fischer R."/>
            <person name="Fosker N."/>
            <person name="Fraser A."/>
            <person name="Garcia J.L."/>
            <person name="Garcia M.J."/>
            <person name="Goble A."/>
            <person name="Goldman G.H."/>
            <person name="Gomi K."/>
            <person name="Griffith-Jones S."/>
            <person name="Gwilliam R."/>
            <person name="Haas B.J."/>
            <person name="Haas H."/>
            <person name="Harris D.E."/>
            <person name="Horiuchi H."/>
            <person name="Huang J."/>
            <person name="Humphray S."/>
            <person name="Jimenez J."/>
            <person name="Keller N."/>
            <person name="Khouri H."/>
            <person name="Kitamoto K."/>
            <person name="Kobayashi T."/>
            <person name="Konzack S."/>
            <person name="Kulkarni R."/>
            <person name="Kumagai T."/>
            <person name="Lafton A."/>
            <person name="Latge J.-P."/>
            <person name="Li W."/>
            <person name="Lord A."/>
            <person name="Lu C."/>
            <person name="Majoros W.H."/>
            <person name="May G.S."/>
            <person name="Miller B.L."/>
            <person name="Mohamoud Y."/>
            <person name="Molina M."/>
            <person name="Monod M."/>
            <person name="Mouyna I."/>
            <person name="Mulligan S."/>
            <person name="Murphy L.D."/>
            <person name="O'Neil S."/>
            <person name="Paulsen I."/>
            <person name="Penalva M.A."/>
            <person name="Pertea M."/>
            <person name="Price C."/>
            <person name="Pritchard B.L."/>
            <person name="Quail M.A."/>
            <person name="Rabbinowitsch E."/>
            <person name="Rawlins N."/>
            <person name="Rajandream M.A."/>
            <person name="Reichard U."/>
            <person name="Renauld H."/>
            <person name="Robson G.D."/>
            <person name="Rodriguez de Cordoba S."/>
            <person name="Rodriguez-Pena J.M."/>
            <person name="Ronning C.M."/>
            <person name="Rutter S."/>
            <person name="Salzberg S.L."/>
            <person name="Sanchez M."/>
            <person name="Sanchez-Ferrero J.C."/>
            <person name="Saunders D."/>
            <person name="Seeger K."/>
            <person name="Squares R."/>
            <person name="Squares S."/>
            <person name="Takeuchi M."/>
            <person name="Tekaia F."/>
            <person name="Turner G."/>
            <person name="Vazquez de Aldana C.R."/>
            <person name="Weidman J."/>
            <person name="White O."/>
            <person name="Woodward J.R."/>
            <person name="Yu J.-H."/>
            <person name="Fraser C.M."/>
            <person name="Galagan J.E."/>
            <person name="Asai K."/>
            <person name="Machida M."/>
            <person name="Hall N."/>
            <person name="Barrell B.G."/>
            <person name="Denning D.W."/>
        </authorList>
    </citation>
    <scope>NUCLEOTIDE SEQUENCE [LARGE SCALE GENOMIC DNA]</scope>
    <source>
        <strain>ATCC MYA-4609 / CBS 101355 / FGSC A1100 / Af293</strain>
    </source>
</reference>
<reference key="2">
    <citation type="journal article" date="2006" name="Gene">
        <title>Phylogenomic analysis of non-ribosomal peptide synthetases in the genus Aspergillus.</title>
        <authorList>
            <person name="Cramer R.A. Jr."/>
            <person name="Stajich J.E."/>
            <person name="Yamanaka Y."/>
            <person name="Dietrich F.S."/>
            <person name="Steinbach W.J."/>
            <person name="Perfect J.R."/>
        </authorList>
    </citation>
    <scope>NOMENCLATURE</scope>
</reference>
<reference key="3">
    <citation type="journal article" date="2007" name="Microbiology">
        <title>Nonribosomal peptide synthesis in Aspergillus fumigatus and other fungi.</title>
        <authorList>
            <person name="Stack D."/>
            <person name="Neville C."/>
            <person name="Doyle S."/>
        </authorList>
    </citation>
    <scope>REVIEW ON FUNCTION</scope>
    <scope>DOMAIN</scope>
</reference>
<name>NRPS6_ASPFU</name>
<keyword id="KW-0436">Ligase</keyword>
<keyword id="KW-0596">Phosphopantetheine</keyword>
<keyword id="KW-0597">Phosphoprotein</keyword>
<keyword id="KW-1185">Reference proteome</keyword>
<keyword id="KW-0677">Repeat</keyword>
<keyword id="KW-0843">Virulence</keyword>
<organism>
    <name type="scientific">Aspergillus fumigatus (strain ATCC MYA-4609 / CBS 101355 / FGSC A1100 / Af293)</name>
    <name type="common">Neosartorya fumigata</name>
    <dbReference type="NCBI Taxonomy" id="330879"/>
    <lineage>
        <taxon>Eukaryota</taxon>
        <taxon>Fungi</taxon>
        <taxon>Dikarya</taxon>
        <taxon>Ascomycota</taxon>
        <taxon>Pezizomycotina</taxon>
        <taxon>Eurotiomycetes</taxon>
        <taxon>Eurotiomycetidae</taxon>
        <taxon>Eurotiales</taxon>
        <taxon>Aspergillaceae</taxon>
        <taxon>Aspergillus</taxon>
        <taxon>Aspergillus subgen. Fumigati</taxon>
    </lineage>
</organism>
<sequence>MTAIDVPWLSTPRRDNSHGTRSNSSCQPSCTQRIAVPISPDAVKYPLAVFCFAWAVTLGAYLDSQELVIGFAFHGWDGDTSIPSAGTCRIRIRPEQEILPALDEVVADGDKGLRSWVAQGAGSETDIAIQRKEVGDSLHPAVHGDEKLSPEIIITPSGNQGPYHVQGRFDPHIVAPALAHMMLHQFAFAVQGIVRGQSSIASSQVKDLQAISPDGMAQLMRWNRQSAAEEDGACVQDLIQRTCQQQPHAMAVCAWDGSWSYQELDCQASHLASQLCDHGIEPEKFVGLLFEKSKWTTVAILAVLKAGGAFVLLDPTQPAAYLSAICTMTRTALLLCSSHNQRLAAELRQTTIQVPRDPYHGAMPTSDFRRQSSPAVQPHHTLYACFTSGSTGRPKGFIIDHVAFNSGLQTYAHATGLGCDSRVFQFASYSFAPSITDQLASLIVGASICVPAEEELQNDVEGSISQLQATWLKLTPSVARTLDPGRLPCVKTLILVGEEAQVSDVAAWQDHGITVLGLYGQSENAKGTMVSRKSSEDADPGNIGSPFCAVGWVVDPDDYHRLMPIGATGELLLESPCLCRGYIDNEDETKLAFVSKPSWLTQVRGQGTAQPLLRTGDIVRYNCVDGTFCLVGRKGNRVKLRGQRLELAQVEHHLRSCLSSTHPVLADVVQPANENGRDPMLVAFVPWADSQSAADATDGFFAPPTKDFQTQARAVLGRLRHLLPSFMVPSTLLAVRTIPRTGTGKIHRRRLQEAASMLSRKQLMAYISPFIPYRAPETELERKLQRACGRLLNIEADQISMQDNFFDLGGNSLTARQLVAVARAEGLQVSVAQIFQQPTLAGLAQTHRHPVRRAEVPRSSHDPDPFGRVRDDVRREGLPHIARGNIEDALPVLYTQMTTARDHCVDFFPLRVIGGQLDPEQLRLAWTRVIQAFPILRTVFPRFRGRFIQLVVRDIGDSNFYRVVEAPSGQTAEEWARALCTEAIQFRCPVDRPVAQLTLIQAAGSSALVLRLCHAQYDGSCLEHLVRSLMMAYHGRPLVVESDFQAYTRTCLRLRIPEVLDFWRRFLAGSSPTQLASSMTGDREAARKINRSFFRREVNSLAAPAGFTLATVVKAAWSWVLRNETRSEDVVFGQLVSCRGSVPLPHADTIIGPCMNIIPVRVGRDLLGAVQAQHAQTMEFDMIGMDEIVRHCTSWPAGTEPDSIIIHENFHVDWEVHDGGVTIQKIAAVFNQQPSSLTFLITIPTETGLIAVLMAPANMSSTHADRVLDLFCNTLTRLAWSPAAVLRRSE</sequence>
<protein>
    <recommendedName>
        <fullName>Nonribosomal peptide synthetase 6</fullName>
        <ecNumber>6.3.2.-</ecNumber>
    </recommendedName>
</protein>
<evidence type="ECO:0000255" key="1">
    <source>
        <dbReference type="PROSITE-ProRule" id="PRU00258"/>
    </source>
</evidence>
<evidence type="ECO:0000256" key="2">
    <source>
        <dbReference type="SAM" id="MobiDB-lite"/>
    </source>
</evidence>
<evidence type="ECO:0000269" key="3">
    <source>
    </source>
</evidence>
<evidence type="ECO:0000305" key="4"/>
<dbReference type="EC" id="6.3.2.-"/>
<dbReference type="EMBL" id="AAHF01000002">
    <property type="protein sequence ID" value="EAL92213.1"/>
    <property type="molecule type" value="Genomic_DNA"/>
</dbReference>
<dbReference type="RefSeq" id="XP_754251.1">
    <property type="nucleotide sequence ID" value="XM_749158.1"/>
</dbReference>
<dbReference type="SMR" id="Q4WYP0"/>
<dbReference type="STRING" id="330879.Q4WYP0"/>
<dbReference type="EnsemblFungi" id="EAL92213">
    <property type="protein sequence ID" value="EAL92213"/>
    <property type="gene ID" value="AFUA_3G13730"/>
</dbReference>
<dbReference type="GeneID" id="3512418"/>
<dbReference type="KEGG" id="afm:AFUA_3G13730"/>
<dbReference type="VEuPathDB" id="FungiDB:Afu3g13730"/>
<dbReference type="eggNOG" id="KOG1178">
    <property type="taxonomic scope" value="Eukaryota"/>
</dbReference>
<dbReference type="HOGENOM" id="CLU_000022_60_3_1"/>
<dbReference type="InParanoid" id="Q4WYP0"/>
<dbReference type="OMA" id="QIENLAW"/>
<dbReference type="OrthoDB" id="416786at2759"/>
<dbReference type="Proteomes" id="UP000002530">
    <property type="component" value="Chromosome 3"/>
</dbReference>
<dbReference type="GO" id="GO:0005737">
    <property type="term" value="C:cytoplasm"/>
    <property type="evidence" value="ECO:0000318"/>
    <property type="project" value="GO_Central"/>
</dbReference>
<dbReference type="GO" id="GO:0016874">
    <property type="term" value="F:ligase activity"/>
    <property type="evidence" value="ECO:0007669"/>
    <property type="project" value="UniProtKB-KW"/>
</dbReference>
<dbReference type="GO" id="GO:0031177">
    <property type="term" value="F:phosphopantetheine binding"/>
    <property type="evidence" value="ECO:0000318"/>
    <property type="project" value="GO_Central"/>
</dbReference>
<dbReference type="GO" id="GO:0043041">
    <property type="term" value="P:amino acid activation for nonribosomal peptide biosynthetic process"/>
    <property type="evidence" value="ECO:0000318"/>
    <property type="project" value="GO_Central"/>
</dbReference>
<dbReference type="GO" id="GO:0019184">
    <property type="term" value="P:nonribosomal peptide biosynthetic process"/>
    <property type="evidence" value="ECO:0000255"/>
    <property type="project" value="AspGD"/>
</dbReference>
<dbReference type="GO" id="GO:0019748">
    <property type="term" value="P:secondary metabolic process"/>
    <property type="evidence" value="ECO:0000303"/>
    <property type="project" value="AspGD"/>
</dbReference>
<dbReference type="GO" id="GO:0044550">
    <property type="term" value="P:secondary metabolite biosynthetic process"/>
    <property type="evidence" value="ECO:0000318"/>
    <property type="project" value="GO_Central"/>
</dbReference>
<dbReference type="CDD" id="cd05918">
    <property type="entry name" value="A_NRPS_SidN3_like"/>
    <property type="match status" value="1"/>
</dbReference>
<dbReference type="CDD" id="cd19542">
    <property type="entry name" value="CT_NRPS-like"/>
    <property type="match status" value="1"/>
</dbReference>
<dbReference type="FunFam" id="3.40.50.12780:FF:000012">
    <property type="entry name" value="Non-ribosomal peptide synthetase"/>
    <property type="match status" value="1"/>
</dbReference>
<dbReference type="FunFam" id="1.10.1200.10:FF:000005">
    <property type="entry name" value="Nonribosomal peptide synthetase 1"/>
    <property type="match status" value="1"/>
</dbReference>
<dbReference type="Gene3D" id="3.30.300.30">
    <property type="match status" value="1"/>
</dbReference>
<dbReference type="Gene3D" id="1.10.1200.10">
    <property type="entry name" value="ACP-like"/>
    <property type="match status" value="1"/>
</dbReference>
<dbReference type="Gene3D" id="3.30.559.10">
    <property type="entry name" value="Chloramphenicol acetyltransferase-like domain"/>
    <property type="match status" value="1"/>
</dbReference>
<dbReference type="Gene3D" id="3.40.50.12780">
    <property type="entry name" value="N-terminal domain of ligase-like"/>
    <property type="match status" value="1"/>
</dbReference>
<dbReference type="Gene3D" id="3.30.559.30">
    <property type="entry name" value="Nonribosomal peptide synthetase, condensation domain"/>
    <property type="match status" value="1"/>
</dbReference>
<dbReference type="InterPro" id="IPR036736">
    <property type="entry name" value="ACP-like_sf"/>
</dbReference>
<dbReference type="InterPro" id="IPR045851">
    <property type="entry name" value="AMP-bd_C_sf"/>
</dbReference>
<dbReference type="InterPro" id="IPR000873">
    <property type="entry name" value="AMP-dep_synth/lig_dom"/>
</dbReference>
<dbReference type="InterPro" id="IPR042099">
    <property type="entry name" value="ANL_N_sf"/>
</dbReference>
<dbReference type="InterPro" id="IPR023213">
    <property type="entry name" value="CAT-like_dom_sf"/>
</dbReference>
<dbReference type="InterPro" id="IPR001242">
    <property type="entry name" value="Condensatn"/>
</dbReference>
<dbReference type="InterPro" id="IPR009081">
    <property type="entry name" value="PP-bd_ACP"/>
</dbReference>
<dbReference type="PANTHER" id="PTHR45527">
    <property type="entry name" value="NONRIBOSOMAL PEPTIDE SYNTHETASE"/>
    <property type="match status" value="1"/>
</dbReference>
<dbReference type="PANTHER" id="PTHR45527:SF3">
    <property type="entry name" value="SIDEROPHORE SYNTHETASE (EUROFUNG)"/>
    <property type="match status" value="1"/>
</dbReference>
<dbReference type="Pfam" id="PF00501">
    <property type="entry name" value="AMP-binding"/>
    <property type="match status" value="1"/>
</dbReference>
<dbReference type="Pfam" id="PF00668">
    <property type="entry name" value="Condensation"/>
    <property type="match status" value="1"/>
</dbReference>
<dbReference type="Pfam" id="PF00550">
    <property type="entry name" value="PP-binding"/>
    <property type="match status" value="1"/>
</dbReference>
<dbReference type="SUPFAM" id="SSF56801">
    <property type="entry name" value="Acetyl-CoA synthetase-like"/>
    <property type="match status" value="1"/>
</dbReference>
<dbReference type="SUPFAM" id="SSF47336">
    <property type="entry name" value="ACP-like"/>
    <property type="match status" value="1"/>
</dbReference>
<dbReference type="SUPFAM" id="SSF52777">
    <property type="entry name" value="CoA-dependent acyltransferases"/>
    <property type="match status" value="2"/>
</dbReference>
<dbReference type="PROSITE" id="PS50075">
    <property type="entry name" value="CARRIER"/>
    <property type="match status" value="1"/>
</dbReference>
<gene>
    <name type="primary">NRPS6</name>
    <name type="synonym">pesG</name>
    <name type="ORF">AFUA_3G13730</name>
</gene>
<accession>Q4WYP0</accession>
<proteinExistence type="inferred from homology"/>
<comment type="function">
    <text>Nonribosomal peptide synthesis (NRPS) is a key mechanism responsible for the biosynthesis of bioactive metabolites which are potentially contributing to organismal virulence.</text>
</comment>
<comment type="domain">
    <text evidence="3">NRP synthetases are composed of discrete domains (adenylation (A), thiolation (T) or peptidyl carrier protein (PCP) and condensation (C) domains) which when grouped together are referred to as a single module. Each module is responsible for the recognition (via the A domain) and incorporation of a single amino acid into the growing peptide product. Thus, an NRP synthetase is generally composed of one or more modules and can terminate in a thioesterase domain (TE) that releases the newly synthesized peptide from the enzyme. Occasionally, epimerase (E) domains (responsible for l- to d- amino acid conversion) are present within the NRP synthetase. NRPS6 has the following architecture: A-T-C.</text>
</comment>
<comment type="similarity">
    <text evidence="4">Belongs to the NRP synthetase family.</text>
</comment>